<proteinExistence type="inferred from homology"/>
<gene>
    <name evidence="1" type="primary">gpmI</name>
    <name type="ordered locus">tlr0151</name>
</gene>
<evidence type="ECO:0000255" key="1">
    <source>
        <dbReference type="HAMAP-Rule" id="MF_01038"/>
    </source>
</evidence>
<protein>
    <recommendedName>
        <fullName evidence="1">2,3-bisphosphoglycerate-independent phosphoglycerate mutase</fullName>
        <shortName evidence="1">BPG-independent PGAM</shortName>
        <shortName evidence="1">Phosphoglyceromutase</shortName>
        <shortName evidence="1">iPGM</shortName>
        <ecNumber evidence="1">5.4.2.12</ecNumber>
    </recommendedName>
</protein>
<accession>P59177</accession>
<organism>
    <name type="scientific">Thermosynechococcus vestitus (strain NIES-2133 / IAM M-273 / BP-1)</name>
    <dbReference type="NCBI Taxonomy" id="197221"/>
    <lineage>
        <taxon>Bacteria</taxon>
        <taxon>Bacillati</taxon>
        <taxon>Cyanobacteriota</taxon>
        <taxon>Cyanophyceae</taxon>
        <taxon>Acaryochloridales</taxon>
        <taxon>Thermosynechococcaceae</taxon>
        <taxon>Thermosynechococcus</taxon>
    </lineage>
</organism>
<keyword id="KW-0324">Glycolysis</keyword>
<keyword id="KW-0413">Isomerase</keyword>
<keyword id="KW-0464">Manganese</keyword>
<keyword id="KW-0479">Metal-binding</keyword>
<keyword id="KW-1185">Reference proteome</keyword>
<name>GPMI_THEVB</name>
<dbReference type="EC" id="5.4.2.12" evidence="1"/>
<dbReference type="EMBL" id="BA000039">
    <property type="protein sequence ID" value="BAC07704.1"/>
    <property type="molecule type" value="Genomic_DNA"/>
</dbReference>
<dbReference type="RefSeq" id="NP_680942.1">
    <property type="nucleotide sequence ID" value="NC_004113.1"/>
</dbReference>
<dbReference type="RefSeq" id="WP_011056006.1">
    <property type="nucleotide sequence ID" value="NC_004113.1"/>
</dbReference>
<dbReference type="SMR" id="P59177"/>
<dbReference type="STRING" id="197221.gene:10746731"/>
<dbReference type="EnsemblBacteria" id="BAC07704">
    <property type="protein sequence ID" value="BAC07704"/>
    <property type="gene ID" value="BAC07704"/>
</dbReference>
<dbReference type="KEGG" id="tel:tlr0151"/>
<dbReference type="PATRIC" id="fig|197221.4.peg.157"/>
<dbReference type="eggNOG" id="COG0696">
    <property type="taxonomic scope" value="Bacteria"/>
</dbReference>
<dbReference type="UniPathway" id="UPA00109">
    <property type="reaction ID" value="UER00186"/>
</dbReference>
<dbReference type="Proteomes" id="UP000000440">
    <property type="component" value="Chromosome"/>
</dbReference>
<dbReference type="GO" id="GO:0005829">
    <property type="term" value="C:cytosol"/>
    <property type="evidence" value="ECO:0007669"/>
    <property type="project" value="TreeGrafter"/>
</dbReference>
<dbReference type="GO" id="GO:0030145">
    <property type="term" value="F:manganese ion binding"/>
    <property type="evidence" value="ECO:0007669"/>
    <property type="project" value="UniProtKB-UniRule"/>
</dbReference>
<dbReference type="GO" id="GO:0004619">
    <property type="term" value="F:phosphoglycerate mutase activity"/>
    <property type="evidence" value="ECO:0007669"/>
    <property type="project" value="UniProtKB-EC"/>
</dbReference>
<dbReference type="GO" id="GO:0006007">
    <property type="term" value="P:glucose catabolic process"/>
    <property type="evidence" value="ECO:0007669"/>
    <property type="project" value="InterPro"/>
</dbReference>
<dbReference type="GO" id="GO:0006096">
    <property type="term" value="P:glycolytic process"/>
    <property type="evidence" value="ECO:0007669"/>
    <property type="project" value="UniProtKB-UniRule"/>
</dbReference>
<dbReference type="CDD" id="cd16010">
    <property type="entry name" value="iPGM"/>
    <property type="match status" value="1"/>
</dbReference>
<dbReference type="FunFam" id="3.40.1450.10:FF:000002">
    <property type="entry name" value="2,3-bisphosphoglycerate-independent phosphoglycerate mutase"/>
    <property type="match status" value="1"/>
</dbReference>
<dbReference type="Gene3D" id="3.40.720.10">
    <property type="entry name" value="Alkaline Phosphatase, subunit A"/>
    <property type="match status" value="1"/>
</dbReference>
<dbReference type="Gene3D" id="3.40.1450.10">
    <property type="entry name" value="BPG-independent phosphoglycerate mutase, domain B"/>
    <property type="match status" value="1"/>
</dbReference>
<dbReference type="HAMAP" id="MF_01038">
    <property type="entry name" value="GpmI"/>
    <property type="match status" value="1"/>
</dbReference>
<dbReference type="InterPro" id="IPR017850">
    <property type="entry name" value="Alkaline_phosphatase_core_sf"/>
</dbReference>
<dbReference type="InterPro" id="IPR011258">
    <property type="entry name" value="BPG-indep_PGM_N"/>
</dbReference>
<dbReference type="InterPro" id="IPR006124">
    <property type="entry name" value="Metalloenzyme"/>
</dbReference>
<dbReference type="InterPro" id="IPR036646">
    <property type="entry name" value="PGAM_B_sf"/>
</dbReference>
<dbReference type="InterPro" id="IPR005995">
    <property type="entry name" value="Pgm_bpd_ind"/>
</dbReference>
<dbReference type="NCBIfam" id="TIGR01307">
    <property type="entry name" value="pgm_bpd_ind"/>
    <property type="match status" value="1"/>
</dbReference>
<dbReference type="PANTHER" id="PTHR31637">
    <property type="entry name" value="2,3-BISPHOSPHOGLYCERATE-INDEPENDENT PHOSPHOGLYCERATE MUTASE"/>
    <property type="match status" value="1"/>
</dbReference>
<dbReference type="PANTHER" id="PTHR31637:SF0">
    <property type="entry name" value="2,3-BISPHOSPHOGLYCERATE-INDEPENDENT PHOSPHOGLYCERATE MUTASE"/>
    <property type="match status" value="1"/>
</dbReference>
<dbReference type="Pfam" id="PF06415">
    <property type="entry name" value="iPGM_N"/>
    <property type="match status" value="1"/>
</dbReference>
<dbReference type="Pfam" id="PF01676">
    <property type="entry name" value="Metalloenzyme"/>
    <property type="match status" value="1"/>
</dbReference>
<dbReference type="PIRSF" id="PIRSF001492">
    <property type="entry name" value="IPGAM"/>
    <property type="match status" value="1"/>
</dbReference>
<dbReference type="SUPFAM" id="SSF64158">
    <property type="entry name" value="2,3-Bisphosphoglycerate-independent phosphoglycerate mutase, substrate-binding domain"/>
    <property type="match status" value="1"/>
</dbReference>
<dbReference type="SUPFAM" id="SSF53649">
    <property type="entry name" value="Alkaline phosphatase-like"/>
    <property type="match status" value="1"/>
</dbReference>
<comment type="function">
    <text evidence="1">Catalyzes the interconversion of 2-phosphoglycerate and 3-phosphoglycerate.</text>
</comment>
<comment type="catalytic activity">
    <reaction evidence="1">
        <text>(2R)-2-phosphoglycerate = (2R)-3-phosphoglycerate</text>
        <dbReference type="Rhea" id="RHEA:15901"/>
        <dbReference type="ChEBI" id="CHEBI:58272"/>
        <dbReference type="ChEBI" id="CHEBI:58289"/>
        <dbReference type="EC" id="5.4.2.12"/>
    </reaction>
</comment>
<comment type="cofactor">
    <cofactor evidence="1">
        <name>Mn(2+)</name>
        <dbReference type="ChEBI" id="CHEBI:29035"/>
    </cofactor>
    <text evidence="1">Binds 2 manganese ions per subunit.</text>
</comment>
<comment type="pathway">
    <text evidence="1">Carbohydrate degradation; glycolysis; pyruvate from D-glyceraldehyde 3-phosphate: step 3/5.</text>
</comment>
<comment type="subunit">
    <text evidence="1">Monomer.</text>
</comment>
<comment type="similarity">
    <text evidence="1">Belongs to the BPG-independent phosphoglycerate mutase family.</text>
</comment>
<reference key="1">
    <citation type="journal article" date="2002" name="DNA Res.">
        <title>Complete genome structure of the thermophilic cyanobacterium Thermosynechococcus elongatus BP-1.</title>
        <authorList>
            <person name="Nakamura Y."/>
            <person name="Kaneko T."/>
            <person name="Sato S."/>
            <person name="Ikeuchi M."/>
            <person name="Katoh H."/>
            <person name="Sasamoto S."/>
            <person name="Watanabe A."/>
            <person name="Iriguchi M."/>
            <person name="Kawashima K."/>
            <person name="Kimura T."/>
            <person name="Kishida Y."/>
            <person name="Kiyokawa C."/>
            <person name="Kohara M."/>
            <person name="Matsumoto M."/>
            <person name="Matsuno A."/>
            <person name="Nakazaki N."/>
            <person name="Shimpo S."/>
            <person name="Sugimoto M."/>
            <person name="Takeuchi C."/>
            <person name="Yamada M."/>
            <person name="Tabata S."/>
        </authorList>
    </citation>
    <scope>NUCLEOTIDE SEQUENCE [LARGE SCALE GENOMIC DNA]</scope>
    <source>
        <strain>NIES-2133 / IAM M-273 / BP-1</strain>
    </source>
</reference>
<feature type="chain" id="PRO_0000212219" description="2,3-bisphosphoglycerate-independent phosphoglycerate mutase">
    <location>
        <begin position="1"/>
        <end position="531"/>
    </location>
</feature>
<feature type="active site" description="Phosphoserine intermediate" evidence="1">
    <location>
        <position position="65"/>
    </location>
</feature>
<feature type="binding site" evidence="1">
    <location>
        <position position="15"/>
    </location>
    <ligand>
        <name>Mn(2+)</name>
        <dbReference type="ChEBI" id="CHEBI:29035"/>
        <label>2</label>
    </ligand>
</feature>
<feature type="binding site" evidence="1">
    <location>
        <position position="65"/>
    </location>
    <ligand>
        <name>Mn(2+)</name>
        <dbReference type="ChEBI" id="CHEBI:29035"/>
        <label>2</label>
    </ligand>
</feature>
<feature type="binding site" evidence="1">
    <location>
        <position position="126"/>
    </location>
    <ligand>
        <name>substrate</name>
    </ligand>
</feature>
<feature type="binding site" evidence="1">
    <location>
        <begin position="155"/>
        <end position="156"/>
    </location>
    <ligand>
        <name>substrate</name>
    </ligand>
</feature>
<feature type="binding site" evidence="1">
    <location>
        <position position="187"/>
    </location>
    <ligand>
        <name>substrate</name>
    </ligand>
</feature>
<feature type="binding site" evidence="1">
    <location>
        <position position="193"/>
    </location>
    <ligand>
        <name>substrate</name>
    </ligand>
</feature>
<feature type="binding site" evidence="1">
    <location>
        <begin position="257"/>
        <end position="260"/>
    </location>
    <ligand>
        <name>substrate</name>
    </ligand>
</feature>
<feature type="binding site" evidence="1">
    <location>
        <position position="330"/>
    </location>
    <ligand>
        <name>substrate</name>
    </ligand>
</feature>
<feature type="binding site" evidence="1">
    <location>
        <position position="397"/>
    </location>
    <ligand>
        <name>Mn(2+)</name>
        <dbReference type="ChEBI" id="CHEBI:29035"/>
        <label>1</label>
    </ligand>
</feature>
<feature type="binding site" evidence="1">
    <location>
        <position position="401"/>
    </location>
    <ligand>
        <name>Mn(2+)</name>
        <dbReference type="ChEBI" id="CHEBI:29035"/>
        <label>1</label>
    </ligand>
</feature>
<feature type="binding site" evidence="1">
    <location>
        <position position="438"/>
    </location>
    <ligand>
        <name>Mn(2+)</name>
        <dbReference type="ChEBI" id="CHEBI:29035"/>
        <label>2</label>
    </ligand>
</feature>
<feature type="binding site" evidence="1">
    <location>
        <position position="439"/>
    </location>
    <ligand>
        <name>Mn(2+)</name>
        <dbReference type="ChEBI" id="CHEBI:29035"/>
        <label>2</label>
    </ligand>
</feature>
<feature type="binding site" evidence="1">
    <location>
        <position position="456"/>
    </location>
    <ligand>
        <name>Mn(2+)</name>
        <dbReference type="ChEBI" id="CHEBI:29035"/>
        <label>1</label>
    </ligand>
</feature>
<sequence length="531" mass="57914">MASSPVAPVVLVILDGWGYREETYGNAIASAYTPVIDSLWQAYPHTLIHTSGKAVGLPKGQMGNSEVGHLNIGAGRIVPQELVRISDAVEEGSLFSNPVLVRLCQTVKERNGKLHFIGLCSAGGVHSHIDHLYGLVELAKRHGLPACIHVITDGRDTPPRDAAGVLEELEQRLKTSGCGRIVTVSGRYYAMDRDRRWERTEAAYRVMTSNEHIQPLRAVDVARQSYAQDIGDEFIVPTRIAAGAVEPGDGVVFFNFRPDRARQLTQAFIDPNFSGFERALITPLDFVTFTQYDASFNCGVAFPPQNLSHILGEVIAEHGLKQLRAAETEKYAHVTYFFNGGLEEPFPGEDRILIPSPMVTTYDQAPAMSALAVTQAVKKAIEKQEYALVVVNFANSDMVGHTGKLAATIQAIETVDRCVGVLVEAATKVGGTLLITADHGNAEYMIDEDGNPWTAHTTNPVPFILVEGEKRKVPGHGGHVILRKDGCLADIAPTILEILELPQPLEMTGRSLIVSAPYEMRLNRTPVSLKI</sequence>